<evidence type="ECO:0000255" key="1">
    <source>
        <dbReference type="HAMAP-Rule" id="MF_00291"/>
    </source>
</evidence>
<evidence type="ECO:0000256" key="2">
    <source>
        <dbReference type="SAM" id="MobiDB-lite"/>
    </source>
</evidence>
<evidence type="ECO:0000305" key="3"/>
<feature type="chain" id="PRO_1000204877" description="Small ribosomal subunit protein uS2">
    <location>
        <begin position="1"/>
        <end position="286"/>
    </location>
</feature>
<feature type="region of interest" description="Disordered" evidence="2">
    <location>
        <begin position="231"/>
        <end position="286"/>
    </location>
</feature>
<feature type="compositionally biased region" description="Low complexity" evidence="2">
    <location>
        <begin position="255"/>
        <end position="280"/>
    </location>
</feature>
<name>RS2_CORK4</name>
<reference key="1">
    <citation type="journal article" date="2008" name="J. Biotechnol.">
        <title>Ultrafast pyrosequencing of Corynebacterium kroppenstedtii DSM44385 revealed insights into the physiology of a lipophilic corynebacterium that lacks mycolic acids.</title>
        <authorList>
            <person name="Tauch A."/>
            <person name="Schneider J."/>
            <person name="Szczepanowski R."/>
            <person name="Tilker A."/>
            <person name="Viehoever P."/>
            <person name="Gartemann K.-H."/>
            <person name="Arnold W."/>
            <person name="Blom J."/>
            <person name="Brinkrolf K."/>
            <person name="Brune I."/>
            <person name="Goetker S."/>
            <person name="Weisshaar B."/>
            <person name="Goesmann A."/>
            <person name="Droege M."/>
            <person name="Puehler A."/>
        </authorList>
    </citation>
    <scope>NUCLEOTIDE SEQUENCE [LARGE SCALE GENOMIC DNA]</scope>
    <source>
        <strain>DSM 44385 / JCM 11950 / CIP 105744 / CCUG 35717</strain>
    </source>
</reference>
<gene>
    <name evidence="1" type="primary">rpsB</name>
    <name type="ordered locus">ckrop_1169</name>
</gene>
<organism>
    <name type="scientific">Corynebacterium kroppenstedtii (strain DSM 44385 / JCM 11950 / CIP 105744 / CCUG 35717)</name>
    <dbReference type="NCBI Taxonomy" id="645127"/>
    <lineage>
        <taxon>Bacteria</taxon>
        <taxon>Bacillati</taxon>
        <taxon>Actinomycetota</taxon>
        <taxon>Actinomycetes</taxon>
        <taxon>Mycobacteriales</taxon>
        <taxon>Corynebacteriaceae</taxon>
        <taxon>Corynebacterium</taxon>
    </lineage>
</organism>
<protein>
    <recommendedName>
        <fullName evidence="1">Small ribosomal subunit protein uS2</fullName>
    </recommendedName>
    <alternativeName>
        <fullName evidence="3">30S ribosomal protein S2</fullName>
    </alternativeName>
</protein>
<dbReference type="EMBL" id="CP001620">
    <property type="protein sequence ID" value="ACR17914.1"/>
    <property type="molecule type" value="Genomic_DNA"/>
</dbReference>
<dbReference type="RefSeq" id="WP_012731801.1">
    <property type="nucleotide sequence ID" value="NC_012704.1"/>
</dbReference>
<dbReference type="SMR" id="C4LJA9"/>
<dbReference type="STRING" id="645127.ckrop_1169"/>
<dbReference type="KEGG" id="ckp:ckrop_1169"/>
<dbReference type="eggNOG" id="COG0052">
    <property type="taxonomic scope" value="Bacteria"/>
</dbReference>
<dbReference type="HOGENOM" id="CLU_040318_2_2_11"/>
<dbReference type="OrthoDB" id="9808036at2"/>
<dbReference type="Proteomes" id="UP000001473">
    <property type="component" value="Chromosome"/>
</dbReference>
<dbReference type="GO" id="GO:0022627">
    <property type="term" value="C:cytosolic small ribosomal subunit"/>
    <property type="evidence" value="ECO:0007669"/>
    <property type="project" value="TreeGrafter"/>
</dbReference>
<dbReference type="GO" id="GO:0003735">
    <property type="term" value="F:structural constituent of ribosome"/>
    <property type="evidence" value="ECO:0007669"/>
    <property type="project" value="InterPro"/>
</dbReference>
<dbReference type="GO" id="GO:0006412">
    <property type="term" value="P:translation"/>
    <property type="evidence" value="ECO:0007669"/>
    <property type="project" value="UniProtKB-UniRule"/>
</dbReference>
<dbReference type="CDD" id="cd01425">
    <property type="entry name" value="RPS2"/>
    <property type="match status" value="1"/>
</dbReference>
<dbReference type="FunFam" id="1.10.287.610:FF:000001">
    <property type="entry name" value="30S ribosomal protein S2"/>
    <property type="match status" value="1"/>
</dbReference>
<dbReference type="Gene3D" id="3.40.50.10490">
    <property type="entry name" value="Glucose-6-phosphate isomerase like protein, domain 1"/>
    <property type="match status" value="1"/>
</dbReference>
<dbReference type="Gene3D" id="1.10.287.610">
    <property type="entry name" value="Helix hairpin bin"/>
    <property type="match status" value="1"/>
</dbReference>
<dbReference type="HAMAP" id="MF_00291_B">
    <property type="entry name" value="Ribosomal_uS2_B"/>
    <property type="match status" value="1"/>
</dbReference>
<dbReference type="InterPro" id="IPR001865">
    <property type="entry name" value="Ribosomal_uS2"/>
</dbReference>
<dbReference type="InterPro" id="IPR005706">
    <property type="entry name" value="Ribosomal_uS2_bac/mit/plastid"/>
</dbReference>
<dbReference type="InterPro" id="IPR018130">
    <property type="entry name" value="Ribosomal_uS2_CS"/>
</dbReference>
<dbReference type="InterPro" id="IPR023591">
    <property type="entry name" value="Ribosomal_uS2_flav_dom_sf"/>
</dbReference>
<dbReference type="NCBIfam" id="TIGR01011">
    <property type="entry name" value="rpsB_bact"/>
    <property type="match status" value="1"/>
</dbReference>
<dbReference type="PANTHER" id="PTHR12534">
    <property type="entry name" value="30S RIBOSOMAL PROTEIN S2 PROKARYOTIC AND ORGANELLAR"/>
    <property type="match status" value="1"/>
</dbReference>
<dbReference type="PANTHER" id="PTHR12534:SF0">
    <property type="entry name" value="SMALL RIBOSOMAL SUBUNIT PROTEIN US2M"/>
    <property type="match status" value="1"/>
</dbReference>
<dbReference type="Pfam" id="PF00318">
    <property type="entry name" value="Ribosomal_S2"/>
    <property type="match status" value="1"/>
</dbReference>
<dbReference type="PRINTS" id="PR00395">
    <property type="entry name" value="RIBOSOMALS2"/>
</dbReference>
<dbReference type="SUPFAM" id="SSF52313">
    <property type="entry name" value="Ribosomal protein S2"/>
    <property type="match status" value="1"/>
</dbReference>
<dbReference type="PROSITE" id="PS00962">
    <property type="entry name" value="RIBOSOMAL_S2_1"/>
    <property type="match status" value="1"/>
</dbReference>
<comment type="similarity">
    <text evidence="1">Belongs to the universal ribosomal protein uS2 family.</text>
</comment>
<keyword id="KW-1185">Reference proteome</keyword>
<keyword id="KW-0687">Ribonucleoprotein</keyword>
<keyword id="KW-0689">Ribosomal protein</keyword>
<proteinExistence type="inferred from homology"/>
<accession>C4LJA9</accession>
<sequence>MAVVTMRQLLDAGVHFGHQTRRWNPKMKRYIITERNGIYIIDLQQTLTYIDSAYEFVKETVAHGGNILFVGTKKQAQEAVATEAERVGMPYVNHRWLGGMLTNFQTVHKRLGRLKELQAMDAAENGYEGRTKKEVLMLTRERQKLERVLGGISDMNKVPSAIWIVDTNKEHIAVSEAQKLNIPVVAILDTNCDPDVVDYPIPGNDDAIRSAALLTGVIASAVEDGKKARAERAQAEAKAAAGDNDAPVSSEGESTEVASDAASTASETTATSSDESAAESSEAESK</sequence>